<accession>P0DC62</accession>
<accession>Q8K8L2</accession>
<gene>
    <name evidence="1" type="primary">nadD</name>
    <name type="ordered locus">SpyM3_0226</name>
</gene>
<proteinExistence type="inferred from homology"/>
<organism>
    <name type="scientific">Streptococcus pyogenes serotype M3 (strain ATCC BAA-595 / MGAS315)</name>
    <dbReference type="NCBI Taxonomy" id="198466"/>
    <lineage>
        <taxon>Bacteria</taxon>
        <taxon>Bacillati</taxon>
        <taxon>Bacillota</taxon>
        <taxon>Bacilli</taxon>
        <taxon>Lactobacillales</taxon>
        <taxon>Streptococcaceae</taxon>
        <taxon>Streptococcus</taxon>
    </lineage>
</organism>
<keyword id="KW-0067">ATP-binding</keyword>
<keyword id="KW-0520">NAD</keyword>
<keyword id="KW-0547">Nucleotide-binding</keyword>
<keyword id="KW-0548">Nucleotidyltransferase</keyword>
<keyword id="KW-0662">Pyridine nucleotide biosynthesis</keyword>
<keyword id="KW-0808">Transferase</keyword>
<sequence>MALELLTPFTKVELEEEKKESNRKQIGILGGNFNPIHNAHLVVADQVRQQLGLDQVLLMPECKPPHVDAKETIDEKHRLRMLELAIEDVEGLAIETCELERQGISYTYDTMLYLTEQHPDVDFYFIIGADMVDYLPKWHRIDELVKLVQFVGVQRPKYKAGTSYPVIWVDLPLMDISSSMIRDFIKKGRQPNYLLPKRVLDYITQEGLYQ</sequence>
<evidence type="ECO:0000255" key="1">
    <source>
        <dbReference type="HAMAP-Rule" id="MF_00244"/>
    </source>
</evidence>
<name>NADD_STRP3</name>
<comment type="function">
    <text evidence="1">Catalyzes the reversible adenylation of nicotinate mononucleotide (NaMN) to nicotinic acid adenine dinucleotide (NaAD).</text>
</comment>
<comment type="catalytic activity">
    <reaction evidence="1">
        <text>nicotinate beta-D-ribonucleotide + ATP + H(+) = deamido-NAD(+) + diphosphate</text>
        <dbReference type="Rhea" id="RHEA:22860"/>
        <dbReference type="ChEBI" id="CHEBI:15378"/>
        <dbReference type="ChEBI" id="CHEBI:30616"/>
        <dbReference type="ChEBI" id="CHEBI:33019"/>
        <dbReference type="ChEBI" id="CHEBI:57502"/>
        <dbReference type="ChEBI" id="CHEBI:58437"/>
        <dbReference type="EC" id="2.7.7.18"/>
    </reaction>
</comment>
<comment type="pathway">
    <text evidence="1">Cofactor biosynthesis; NAD(+) biosynthesis; deamido-NAD(+) from nicotinate D-ribonucleotide: step 1/1.</text>
</comment>
<comment type="similarity">
    <text evidence="1">Belongs to the NadD family.</text>
</comment>
<reference key="1">
    <citation type="journal article" date="2002" name="Proc. Natl. Acad. Sci. U.S.A.">
        <title>Genome sequence of a serotype M3 strain of group A Streptococcus: phage-encoded toxins, the high-virulence phenotype, and clone emergence.</title>
        <authorList>
            <person name="Beres S.B."/>
            <person name="Sylva G.L."/>
            <person name="Barbian K.D."/>
            <person name="Lei B."/>
            <person name="Hoff J.S."/>
            <person name="Mammarella N.D."/>
            <person name="Liu M.-Y."/>
            <person name="Smoot J.C."/>
            <person name="Porcella S.F."/>
            <person name="Parkins L.D."/>
            <person name="Campbell D.S."/>
            <person name="Smith T.M."/>
            <person name="McCormick J.K."/>
            <person name="Leung D.Y.M."/>
            <person name="Schlievert P.M."/>
            <person name="Musser J.M."/>
        </authorList>
    </citation>
    <scope>NUCLEOTIDE SEQUENCE [LARGE SCALE GENOMIC DNA]</scope>
    <source>
        <strain>ATCC BAA-595 / MGAS315</strain>
    </source>
</reference>
<dbReference type="EC" id="2.7.7.18" evidence="1"/>
<dbReference type="EMBL" id="AE014074">
    <property type="protein sequence ID" value="AAM78833.1"/>
    <property type="molecule type" value="Genomic_DNA"/>
</dbReference>
<dbReference type="RefSeq" id="WP_002991091.1">
    <property type="nucleotide sequence ID" value="NC_004070.1"/>
</dbReference>
<dbReference type="SMR" id="P0DC62"/>
<dbReference type="KEGG" id="spg:SpyM3_0226"/>
<dbReference type="HOGENOM" id="CLU_069765_3_1_9"/>
<dbReference type="UniPathway" id="UPA00253">
    <property type="reaction ID" value="UER00332"/>
</dbReference>
<dbReference type="Proteomes" id="UP000000564">
    <property type="component" value="Chromosome"/>
</dbReference>
<dbReference type="GO" id="GO:0005524">
    <property type="term" value="F:ATP binding"/>
    <property type="evidence" value="ECO:0007669"/>
    <property type="project" value="UniProtKB-KW"/>
</dbReference>
<dbReference type="GO" id="GO:0004515">
    <property type="term" value="F:nicotinate-nucleotide adenylyltransferase activity"/>
    <property type="evidence" value="ECO:0007669"/>
    <property type="project" value="UniProtKB-UniRule"/>
</dbReference>
<dbReference type="GO" id="GO:0009435">
    <property type="term" value="P:NAD biosynthetic process"/>
    <property type="evidence" value="ECO:0007669"/>
    <property type="project" value="UniProtKB-UniRule"/>
</dbReference>
<dbReference type="CDD" id="cd02165">
    <property type="entry name" value="NMNAT"/>
    <property type="match status" value="1"/>
</dbReference>
<dbReference type="FunFam" id="3.40.50.620:FF:000079">
    <property type="entry name" value="Probable nicotinate-nucleotide adenylyltransferase"/>
    <property type="match status" value="1"/>
</dbReference>
<dbReference type="Gene3D" id="3.40.50.620">
    <property type="entry name" value="HUPs"/>
    <property type="match status" value="1"/>
</dbReference>
<dbReference type="HAMAP" id="MF_00244">
    <property type="entry name" value="NaMN_adenylyltr"/>
    <property type="match status" value="1"/>
</dbReference>
<dbReference type="InterPro" id="IPR004821">
    <property type="entry name" value="Cyt_trans-like"/>
</dbReference>
<dbReference type="InterPro" id="IPR005248">
    <property type="entry name" value="NadD/NMNAT"/>
</dbReference>
<dbReference type="InterPro" id="IPR014729">
    <property type="entry name" value="Rossmann-like_a/b/a_fold"/>
</dbReference>
<dbReference type="NCBIfam" id="TIGR00125">
    <property type="entry name" value="cyt_tran_rel"/>
    <property type="match status" value="1"/>
</dbReference>
<dbReference type="NCBIfam" id="TIGR00482">
    <property type="entry name" value="nicotinate (nicotinamide) nucleotide adenylyltransferase"/>
    <property type="match status" value="1"/>
</dbReference>
<dbReference type="NCBIfam" id="NF000840">
    <property type="entry name" value="PRK00071.1-3"/>
    <property type="match status" value="1"/>
</dbReference>
<dbReference type="NCBIfam" id="NF000841">
    <property type="entry name" value="PRK00071.1-4"/>
    <property type="match status" value="1"/>
</dbReference>
<dbReference type="PANTHER" id="PTHR39321">
    <property type="entry name" value="NICOTINATE-NUCLEOTIDE ADENYLYLTRANSFERASE-RELATED"/>
    <property type="match status" value="1"/>
</dbReference>
<dbReference type="PANTHER" id="PTHR39321:SF3">
    <property type="entry name" value="PHOSPHOPANTETHEINE ADENYLYLTRANSFERASE"/>
    <property type="match status" value="1"/>
</dbReference>
<dbReference type="Pfam" id="PF01467">
    <property type="entry name" value="CTP_transf_like"/>
    <property type="match status" value="1"/>
</dbReference>
<dbReference type="SUPFAM" id="SSF52374">
    <property type="entry name" value="Nucleotidylyl transferase"/>
    <property type="match status" value="1"/>
</dbReference>
<protein>
    <recommendedName>
        <fullName evidence="1">Probable nicotinate-nucleotide adenylyltransferase</fullName>
        <ecNumber evidence="1">2.7.7.18</ecNumber>
    </recommendedName>
    <alternativeName>
        <fullName evidence="1">Deamido-NAD(+) diphosphorylase</fullName>
    </alternativeName>
    <alternativeName>
        <fullName evidence="1">Deamido-NAD(+) pyrophosphorylase</fullName>
    </alternativeName>
    <alternativeName>
        <fullName evidence="1">Nicotinate mononucleotide adenylyltransferase</fullName>
        <shortName evidence="1">NaMN adenylyltransferase</shortName>
    </alternativeName>
</protein>
<feature type="chain" id="PRO_0000181456" description="Probable nicotinate-nucleotide adenylyltransferase">
    <location>
        <begin position="1"/>
        <end position="210"/>
    </location>
</feature>